<organism evidence="9">
    <name type="scientific">Drosophila melanogaster</name>
    <name type="common">Fruit fly</name>
    <dbReference type="NCBI Taxonomy" id="7227"/>
    <lineage>
        <taxon>Eukaryota</taxon>
        <taxon>Metazoa</taxon>
        <taxon>Ecdysozoa</taxon>
        <taxon>Arthropoda</taxon>
        <taxon>Hexapoda</taxon>
        <taxon>Insecta</taxon>
        <taxon>Pterygota</taxon>
        <taxon>Neoptera</taxon>
        <taxon>Endopterygota</taxon>
        <taxon>Diptera</taxon>
        <taxon>Brachycera</taxon>
        <taxon>Muscomorpha</taxon>
        <taxon>Ephydroidea</taxon>
        <taxon>Drosophilidae</taxon>
        <taxon>Drosophila</taxon>
        <taxon>Sophophora</taxon>
    </lineage>
</organism>
<dbReference type="EMBL" id="AE014297">
    <property type="protein sequence ID" value="AAF56369.1"/>
    <property type="molecule type" value="Genomic_DNA"/>
</dbReference>
<dbReference type="EMBL" id="AE014297">
    <property type="protein sequence ID" value="AGB96321.1"/>
    <property type="molecule type" value="Genomic_DNA"/>
</dbReference>
<dbReference type="EMBL" id="AY119052">
    <property type="protein sequence ID" value="AAM50912.1"/>
    <property type="molecule type" value="mRNA"/>
</dbReference>
<dbReference type="RefSeq" id="NP_001262941.1">
    <property type="nucleotide sequence ID" value="NM_001276012.1"/>
</dbReference>
<dbReference type="RefSeq" id="NP_651313.1">
    <property type="nucleotide sequence ID" value="NM_143056.3"/>
</dbReference>
<dbReference type="SMR" id="Q9VC07"/>
<dbReference type="FunCoup" id="Q9VC07">
    <property type="interactions" value="659"/>
</dbReference>
<dbReference type="STRING" id="7227.FBpp0084094"/>
<dbReference type="PaxDb" id="7227-FBpp0084094"/>
<dbReference type="DNASU" id="42983"/>
<dbReference type="EnsemblMetazoa" id="FBtr0084718">
    <property type="protein sequence ID" value="FBpp0084094"/>
    <property type="gene ID" value="FBgn0039251"/>
</dbReference>
<dbReference type="EnsemblMetazoa" id="FBtr0337011">
    <property type="protein sequence ID" value="FBpp0307940"/>
    <property type="gene ID" value="FBgn0039251"/>
</dbReference>
<dbReference type="GeneID" id="42983"/>
<dbReference type="KEGG" id="dme:Dmel_CG17462"/>
<dbReference type="UCSC" id="CG17462-RA">
    <property type="organism name" value="d. melanogaster"/>
</dbReference>
<dbReference type="AGR" id="FB:FBgn0039251"/>
<dbReference type="CTD" id="42983"/>
<dbReference type="FlyBase" id="FBgn0039251">
    <property type="gene designation" value="Trf4-2"/>
</dbReference>
<dbReference type="VEuPathDB" id="VectorBase:FBgn0039251"/>
<dbReference type="eggNOG" id="KOG1906">
    <property type="taxonomic scope" value="Eukaryota"/>
</dbReference>
<dbReference type="GeneTree" id="ENSGT00940000169468"/>
<dbReference type="HOGENOM" id="CLU_013572_0_0_1"/>
<dbReference type="InParanoid" id="Q9VC07"/>
<dbReference type="OMA" id="MSYRNWV"/>
<dbReference type="OrthoDB" id="273917at2759"/>
<dbReference type="PhylomeDB" id="Q9VC07"/>
<dbReference type="SignaLink" id="Q9VC07"/>
<dbReference type="BioGRID-ORCS" id="42983">
    <property type="hits" value="0 hits in 3 CRISPR screens"/>
</dbReference>
<dbReference type="GenomeRNAi" id="42983"/>
<dbReference type="PRO" id="PR:Q9VC07"/>
<dbReference type="Proteomes" id="UP000000803">
    <property type="component" value="Chromosome 3R"/>
</dbReference>
<dbReference type="Bgee" id="FBgn0039251">
    <property type="expression patterns" value="Expressed in mid-late elongation-stage spermatid (Drosophila) in testis and 30 other cell types or tissues"/>
</dbReference>
<dbReference type="GO" id="GO:0005730">
    <property type="term" value="C:nucleolus"/>
    <property type="evidence" value="ECO:0000250"/>
    <property type="project" value="FlyBase"/>
</dbReference>
<dbReference type="GO" id="GO:0031499">
    <property type="term" value="C:TRAMP complex"/>
    <property type="evidence" value="ECO:0000318"/>
    <property type="project" value="GO_Central"/>
</dbReference>
<dbReference type="GO" id="GO:0046872">
    <property type="term" value="F:metal ion binding"/>
    <property type="evidence" value="ECO:0007669"/>
    <property type="project" value="UniProtKB-KW"/>
</dbReference>
<dbReference type="GO" id="GO:1990817">
    <property type="term" value="F:poly(A) RNA polymerase activity"/>
    <property type="evidence" value="ECO:0000250"/>
    <property type="project" value="FlyBase"/>
</dbReference>
<dbReference type="GO" id="GO:0071046">
    <property type="term" value="P:nuclear polyadenylation-dependent ncRNA catabolic process"/>
    <property type="evidence" value="ECO:0000250"/>
    <property type="project" value="FlyBase"/>
</dbReference>
<dbReference type="GO" id="GO:0043634">
    <property type="term" value="P:polyadenylation-dependent ncRNA catabolic process"/>
    <property type="evidence" value="ECO:0000318"/>
    <property type="project" value="GO_Central"/>
</dbReference>
<dbReference type="GO" id="GO:0031123">
    <property type="term" value="P:RNA 3'-end processing"/>
    <property type="evidence" value="ECO:0000318"/>
    <property type="project" value="GO_Central"/>
</dbReference>
<dbReference type="CDD" id="cd05402">
    <property type="entry name" value="NT_PAP_TUTase"/>
    <property type="match status" value="1"/>
</dbReference>
<dbReference type="FunFam" id="3.30.460.10:FF:000099">
    <property type="entry name" value="GM17777"/>
    <property type="match status" value="1"/>
</dbReference>
<dbReference type="Gene3D" id="1.10.1410.10">
    <property type="match status" value="1"/>
</dbReference>
<dbReference type="Gene3D" id="3.30.460.10">
    <property type="entry name" value="Beta Polymerase, domain 2"/>
    <property type="match status" value="1"/>
</dbReference>
<dbReference type="InterPro" id="IPR054708">
    <property type="entry name" value="MTPAP-like_central"/>
</dbReference>
<dbReference type="InterPro" id="IPR043519">
    <property type="entry name" value="NT_sf"/>
</dbReference>
<dbReference type="InterPro" id="IPR002058">
    <property type="entry name" value="PAP_assoc"/>
</dbReference>
<dbReference type="InterPro" id="IPR045862">
    <property type="entry name" value="Trf4-like"/>
</dbReference>
<dbReference type="PANTHER" id="PTHR23092:SF15">
    <property type="entry name" value="INACTIVE NON-CANONICAL POLY(A) RNA POLYMERASE PROTEIN TRF4-2-RELATED"/>
    <property type="match status" value="1"/>
</dbReference>
<dbReference type="PANTHER" id="PTHR23092">
    <property type="entry name" value="POLY(A) RNA POLYMERASE"/>
    <property type="match status" value="1"/>
</dbReference>
<dbReference type="Pfam" id="PF22600">
    <property type="entry name" value="MTPAP-like_central"/>
    <property type="match status" value="1"/>
</dbReference>
<dbReference type="Pfam" id="PF03828">
    <property type="entry name" value="PAP_assoc"/>
    <property type="match status" value="1"/>
</dbReference>
<dbReference type="SUPFAM" id="SSF81301">
    <property type="entry name" value="Nucleotidyltransferase"/>
    <property type="match status" value="1"/>
</dbReference>
<dbReference type="SUPFAM" id="SSF81631">
    <property type="entry name" value="PAP/OAS1 substrate-binding domain"/>
    <property type="match status" value="1"/>
</dbReference>
<dbReference type="PROSITE" id="PS00216">
    <property type="entry name" value="SUGAR_TRANSPORT_1"/>
    <property type="match status" value="1"/>
</dbReference>
<accession>Q9VC07</accession>
<proteinExistence type="evidence at transcript level"/>
<comment type="developmental stage">
    <text evidence="4">Expressed in unfertilized eggs and in early embryos from 0 to 4 hours.</text>
</comment>
<comment type="disruption phenotype">
    <text evidence="4">No visible phenotype. Flies are viable and fertile.</text>
</comment>
<comment type="similarity">
    <text evidence="6">Belongs to the DNA polymerase type-B-like family.</text>
</comment>
<comment type="caution">
    <text evidence="4">Contains the conserved metal-binding sites characteristic of RNA polymerases but has been shown to lack RNA polymerase activity when expressed in E.coli.</text>
</comment>
<keyword id="KW-0460">Magnesium</keyword>
<keyword id="KW-0479">Metal-binding</keyword>
<keyword id="KW-1185">Reference proteome</keyword>
<gene>
    <name evidence="5" type="primary">Trf4-2</name>
    <name evidence="8" type="ORF">CG17462</name>
</gene>
<feature type="chain" id="PRO_0000438420" description="Inactive non-canonical poly(A) RNA polymerase protein Trf4-2">
    <location>
        <begin position="1"/>
        <end position="407"/>
    </location>
</feature>
<feature type="domain" description="PAP-associated" evidence="2">
    <location>
        <begin position="221"/>
        <end position="280"/>
    </location>
</feature>
<feature type="region of interest" description="Disordered" evidence="3">
    <location>
        <begin position="354"/>
        <end position="390"/>
    </location>
</feature>
<feature type="compositionally biased region" description="Low complexity" evidence="3">
    <location>
        <begin position="357"/>
        <end position="371"/>
    </location>
</feature>
<feature type="binding site" evidence="1">
    <location>
        <position position="85"/>
    </location>
    <ligand>
        <name>Mg(2+)</name>
        <dbReference type="ChEBI" id="CHEBI:18420"/>
    </ligand>
</feature>
<feature type="binding site" evidence="1">
    <location>
        <position position="87"/>
    </location>
    <ligand>
        <name>Mg(2+)</name>
        <dbReference type="ChEBI" id="CHEBI:18420"/>
    </ligand>
</feature>
<name>TRF42_DROME</name>
<protein>
    <recommendedName>
        <fullName evidence="6">Inactive non-canonical poly(A) RNA polymerase protein Trf4-2</fullName>
    </recommendedName>
    <alternativeName>
        <fullName evidence="5">Topoisomerase 1-related protein 4-2</fullName>
    </alternativeName>
</protein>
<reference evidence="9" key="1">
    <citation type="journal article" date="2000" name="Science">
        <title>The genome sequence of Drosophila melanogaster.</title>
        <authorList>
            <person name="Adams M.D."/>
            <person name="Celniker S.E."/>
            <person name="Holt R.A."/>
            <person name="Evans C.A."/>
            <person name="Gocayne J.D."/>
            <person name="Amanatides P.G."/>
            <person name="Scherer S.E."/>
            <person name="Li P.W."/>
            <person name="Hoskins R.A."/>
            <person name="Galle R.F."/>
            <person name="George R.A."/>
            <person name="Lewis S.E."/>
            <person name="Richards S."/>
            <person name="Ashburner M."/>
            <person name="Henderson S.N."/>
            <person name="Sutton G.G."/>
            <person name="Wortman J.R."/>
            <person name="Yandell M.D."/>
            <person name="Zhang Q."/>
            <person name="Chen L.X."/>
            <person name="Brandon R.C."/>
            <person name="Rogers Y.-H.C."/>
            <person name="Blazej R.G."/>
            <person name="Champe M."/>
            <person name="Pfeiffer B.D."/>
            <person name="Wan K.H."/>
            <person name="Doyle C."/>
            <person name="Baxter E.G."/>
            <person name="Helt G."/>
            <person name="Nelson C.R."/>
            <person name="Miklos G.L.G."/>
            <person name="Abril J.F."/>
            <person name="Agbayani A."/>
            <person name="An H.-J."/>
            <person name="Andrews-Pfannkoch C."/>
            <person name="Baldwin D."/>
            <person name="Ballew R.M."/>
            <person name="Basu A."/>
            <person name="Baxendale J."/>
            <person name="Bayraktaroglu L."/>
            <person name="Beasley E.M."/>
            <person name="Beeson K.Y."/>
            <person name="Benos P.V."/>
            <person name="Berman B.P."/>
            <person name="Bhandari D."/>
            <person name="Bolshakov S."/>
            <person name="Borkova D."/>
            <person name="Botchan M.R."/>
            <person name="Bouck J."/>
            <person name="Brokstein P."/>
            <person name="Brottier P."/>
            <person name="Burtis K.C."/>
            <person name="Busam D.A."/>
            <person name="Butler H."/>
            <person name="Cadieu E."/>
            <person name="Center A."/>
            <person name="Chandra I."/>
            <person name="Cherry J.M."/>
            <person name="Cawley S."/>
            <person name="Dahlke C."/>
            <person name="Davenport L.B."/>
            <person name="Davies P."/>
            <person name="de Pablos B."/>
            <person name="Delcher A."/>
            <person name="Deng Z."/>
            <person name="Mays A.D."/>
            <person name="Dew I."/>
            <person name="Dietz S.M."/>
            <person name="Dodson K."/>
            <person name="Doup L.E."/>
            <person name="Downes M."/>
            <person name="Dugan-Rocha S."/>
            <person name="Dunkov B.C."/>
            <person name="Dunn P."/>
            <person name="Durbin K.J."/>
            <person name="Evangelista C.C."/>
            <person name="Ferraz C."/>
            <person name="Ferriera S."/>
            <person name="Fleischmann W."/>
            <person name="Fosler C."/>
            <person name="Gabrielian A.E."/>
            <person name="Garg N.S."/>
            <person name="Gelbart W.M."/>
            <person name="Glasser K."/>
            <person name="Glodek A."/>
            <person name="Gong F."/>
            <person name="Gorrell J.H."/>
            <person name="Gu Z."/>
            <person name="Guan P."/>
            <person name="Harris M."/>
            <person name="Harris N.L."/>
            <person name="Harvey D.A."/>
            <person name="Heiman T.J."/>
            <person name="Hernandez J.R."/>
            <person name="Houck J."/>
            <person name="Hostin D."/>
            <person name="Houston K.A."/>
            <person name="Howland T.J."/>
            <person name="Wei M.-H."/>
            <person name="Ibegwam C."/>
            <person name="Jalali M."/>
            <person name="Kalush F."/>
            <person name="Karpen G.H."/>
            <person name="Ke Z."/>
            <person name="Kennison J.A."/>
            <person name="Ketchum K.A."/>
            <person name="Kimmel B.E."/>
            <person name="Kodira C.D."/>
            <person name="Kraft C.L."/>
            <person name="Kravitz S."/>
            <person name="Kulp D."/>
            <person name="Lai Z."/>
            <person name="Lasko P."/>
            <person name="Lei Y."/>
            <person name="Levitsky A.A."/>
            <person name="Li J.H."/>
            <person name="Li Z."/>
            <person name="Liang Y."/>
            <person name="Lin X."/>
            <person name="Liu X."/>
            <person name="Mattei B."/>
            <person name="McIntosh T.C."/>
            <person name="McLeod M.P."/>
            <person name="McPherson D."/>
            <person name="Merkulov G."/>
            <person name="Milshina N.V."/>
            <person name="Mobarry C."/>
            <person name="Morris J."/>
            <person name="Moshrefi A."/>
            <person name="Mount S.M."/>
            <person name="Moy M."/>
            <person name="Murphy B."/>
            <person name="Murphy L."/>
            <person name="Muzny D.M."/>
            <person name="Nelson D.L."/>
            <person name="Nelson D.R."/>
            <person name="Nelson K.A."/>
            <person name="Nixon K."/>
            <person name="Nusskern D.R."/>
            <person name="Pacleb J.M."/>
            <person name="Palazzolo M."/>
            <person name="Pittman G.S."/>
            <person name="Pan S."/>
            <person name="Pollard J."/>
            <person name="Puri V."/>
            <person name="Reese M.G."/>
            <person name="Reinert K."/>
            <person name="Remington K."/>
            <person name="Saunders R.D.C."/>
            <person name="Scheeler F."/>
            <person name="Shen H."/>
            <person name="Shue B.C."/>
            <person name="Siden-Kiamos I."/>
            <person name="Simpson M."/>
            <person name="Skupski M.P."/>
            <person name="Smith T.J."/>
            <person name="Spier E."/>
            <person name="Spradling A.C."/>
            <person name="Stapleton M."/>
            <person name="Strong R."/>
            <person name="Sun E."/>
            <person name="Svirskas R."/>
            <person name="Tector C."/>
            <person name="Turner R."/>
            <person name="Venter E."/>
            <person name="Wang A.H."/>
            <person name="Wang X."/>
            <person name="Wang Z.-Y."/>
            <person name="Wassarman D.A."/>
            <person name="Weinstock G.M."/>
            <person name="Weissenbach J."/>
            <person name="Williams S.M."/>
            <person name="Woodage T."/>
            <person name="Worley K.C."/>
            <person name="Wu D."/>
            <person name="Yang S."/>
            <person name="Yao Q.A."/>
            <person name="Ye J."/>
            <person name="Yeh R.-F."/>
            <person name="Zaveri J.S."/>
            <person name="Zhan M."/>
            <person name="Zhang G."/>
            <person name="Zhao Q."/>
            <person name="Zheng L."/>
            <person name="Zheng X.H."/>
            <person name="Zhong F.N."/>
            <person name="Zhong W."/>
            <person name="Zhou X."/>
            <person name="Zhu S.C."/>
            <person name="Zhu X."/>
            <person name="Smith H.O."/>
            <person name="Gibbs R.A."/>
            <person name="Myers E.W."/>
            <person name="Rubin G.M."/>
            <person name="Venter J.C."/>
        </authorList>
    </citation>
    <scope>NUCLEOTIDE SEQUENCE [LARGE SCALE GENOMIC DNA]</scope>
    <source>
        <strain evidence="9">Berkeley</strain>
    </source>
</reference>
<reference evidence="9" key="2">
    <citation type="journal article" date="2002" name="Genome Biol.">
        <title>Annotation of the Drosophila melanogaster euchromatic genome: a systematic review.</title>
        <authorList>
            <person name="Misra S."/>
            <person name="Crosby M.A."/>
            <person name="Mungall C.J."/>
            <person name="Matthews B.B."/>
            <person name="Campbell K.S."/>
            <person name="Hradecky P."/>
            <person name="Huang Y."/>
            <person name="Kaminker J.S."/>
            <person name="Millburn G.H."/>
            <person name="Prochnik S.E."/>
            <person name="Smith C.D."/>
            <person name="Tupy J.L."/>
            <person name="Whitfield E.J."/>
            <person name="Bayraktaroglu L."/>
            <person name="Berman B.P."/>
            <person name="Bettencourt B.R."/>
            <person name="Celniker S.E."/>
            <person name="de Grey A.D.N.J."/>
            <person name="Drysdale R.A."/>
            <person name="Harris N.L."/>
            <person name="Richter J."/>
            <person name="Russo S."/>
            <person name="Schroeder A.J."/>
            <person name="Shu S.Q."/>
            <person name="Stapleton M."/>
            <person name="Yamada C."/>
            <person name="Ashburner M."/>
            <person name="Gelbart W.M."/>
            <person name="Rubin G.M."/>
            <person name="Lewis S.E."/>
        </authorList>
    </citation>
    <scope>GENOME REANNOTATION</scope>
    <source>
        <strain evidence="9">Berkeley</strain>
    </source>
</reference>
<reference evidence="7" key="3">
    <citation type="journal article" date="2002" name="Genome Biol.">
        <title>A Drosophila full-length cDNA resource.</title>
        <authorList>
            <person name="Stapleton M."/>
            <person name="Carlson J.W."/>
            <person name="Brokstein P."/>
            <person name="Yu C."/>
            <person name="Champe M."/>
            <person name="George R.A."/>
            <person name="Guarin H."/>
            <person name="Kronmiller B."/>
            <person name="Pacleb J.M."/>
            <person name="Park S."/>
            <person name="Wan K.H."/>
            <person name="Rubin G.M."/>
            <person name="Celniker S.E."/>
        </authorList>
    </citation>
    <scope>NUCLEOTIDE SEQUENCE [LARGE SCALE MRNA]</scope>
    <source>
        <strain evidence="7">Berkeley</strain>
    </source>
</reference>
<reference evidence="6" key="4">
    <citation type="journal article" date="2008" name="Mol. Cell. Biol.">
        <title>TRF4 is involved in polyadenylation of snRNAs in Drosophila melanogaster.</title>
        <authorList>
            <person name="Nakamura R."/>
            <person name="Takeuchi R."/>
            <person name="Takata K."/>
            <person name="Shimanouchi K."/>
            <person name="Abe Y."/>
            <person name="Kanai Y."/>
            <person name="Ruike T."/>
            <person name="Ihara A."/>
            <person name="Sakaguchi K."/>
        </authorList>
    </citation>
    <scope>LACK OF RNA POLYMERASE ACTIVITY</scope>
    <scope>DEVELOPMENTAL STAGE</scope>
    <scope>DISRUPTION PHENOTYPE</scope>
</reference>
<evidence type="ECO:0000250" key="1">
    <source>
        <dbReference type="UniProtKB" id="O13833"/>
    </source>
</evidence>
<evidence type="ECO:0000255" key="2"/>
<evidence type="ECO:0000256" key="3">
    <source>
        <dbReference type="SAM" id="MobiDB-lite"/>
    </source>
</evidence>
<evidence type="ECO:0000269" key="4">
    <source>
    </source>
</evidence>
<evidence type="ECO:0000303" key="5">
    <source>
    </source>
</evidence>
<evidence type="ECO:0000305" key="6"/>
<evidence type="ECO:0000312" key="7">
    <source>
        <dbReference type="EMBL" id="AAM50912.1"/>
    </source>
</evidence>
<evidence type="ECO:0000312" key="8">
    <source>
        <dbReference type="FlyBase" id="FBgn0039251"/>
    </source>
</evidence>
<evidence type="ECO:0000312" key="9">
    <source>
        <dbReference type="Proteomes" id="UP000000803"/>
    </source>
</evidence>
<sequence length="407" mass="44997">MCDEANPAKPWQLPDVVYGNGIPALCLLHQEIEQFYNYIRSTPTEFCLRAGAVRRIEDVVLSIWPSASVDLFGSFRTGLNLPDSDIDLVVYYKFWNPRLLHELQNELVSQGVTDPDTVTVLDKASVPVVKFTDLISRIRFDVTFNSVASGVQAADLIKDFIRHFPELPKLVMVLKQFLSLHGFNEVYNSGGVSSYALTLMVISFLQQHARSNRRLSEHSKLALLLIQFLDYYGRKFDFFKYGISVLGQGGCVEKARLRSTLGENNWQSVLCIEDPVTPTNDIGRSSYGVLGVMQGFGAAFVKLSKLVDSDSSKIVGPILANIVEVPQSIINYRAWVHYNFQHLLTPELPCADSLVQPSPTGSTSPSASASASEDERSGGPATIGFGRCDDPPQNIDIVADLANLKMN</sequence>